<accession>O06715</accession>
<accession>Q796R3</accession>
<reference key="1">
    <citation type="journal article" date="1997" name="Microbiology">
        <title>Sequencing of regions downstream of addA (98 degrees) and citG (289 degrees) in Bacillus subtilis.</title>
        <authorList>
            <person name="Medina N."/>
            <person name="Vannier F."/>
            <person name="Roche B."/>
            <person name="Autret S."/>
            <person name="Levine A."/>
            <person name="Seror S.J."/>
        </authorList>
    </citation>
    <scope>NUCLEOTIDE SEQUENCE [GENOMIC DNA]</scope>
    <source>
        <strain>168</strain>
    </source>
</reference>
<reference key="2">
    <citation type="journal article" date="1997" name="Nature">
        <title>The complete genome sequence of the Gram-positive bacterium Bacillus subtilis.</title>
        <authorList>
            <person name="Kunst F."/>
            <person name="Ogasawara N."/>
            <person name="Moszer I."/>
            <person name="Albertini A.M."/>
            <person name="Alloni G."/>
            <person name="Azevedo V."/>
            <person name="Bertero M.G."/>
            <person name="Bessieres P."/>
            <person name="Bolotin A."/>
            <person name="Borchert S."/>
            <person name="Borriss R."/>
            <person name="Boursier L."/>
            <person name="Brans A."/>
            <person name="Braun M."/>
            <person name="Brignell S.C."/>
            <person name="Bron S."/>
            <person name="Brouillet S."/>
            <person name="Bruschi C.V."/>
            <person name="Caldwell B."/>
            <person name="Capuano V."/>
            <person name="Carter N.M."/>
            <person name="Choi S.-K."/>
            <person name="Codani J.-J."/>
            <person name="Connerton I.F."/>
            <person name="Cummings N.J."/>
            <person name="Daniel R.A."/>
            <person name="Denizot F."/>
            <person name="Devine K.M."/>
            <person name="Duesterhoeft A."/>
            <person name="Ehrlich S.D."/>
            <person name="Emmerson P.T."/>
            <person name="Entian K.-D."/>
            <person name="Errington J."/>
            <person name="Fabret C."/>
            <person name="Ferrari E."/>
            <person name="Foulger D."/>
            <person name="Fritz C."/>
            <person name="Fujita M."/>
            <person name="Fujita Y."/>
            <person name="Fuma S."/>
            <person name="Galizzi A."/>
            <person name="Galleron N."/>
            <person name="Ghim S.-Y."/>
            <person name="Glaser P."/>
            <person name="Goffeau A."/>
            <person name="Golightly E.J."/>
            <person name="Grandi G."/>
            <person name="Guiseppi G."/>
            <person name="Guy B.J."/>
            <person name="Haga K."/>
            <person name="Haiech J."/>
            <person name="Harwood C.R."/>
            <person name="Henaut A."/>
            <person name="Hilbert H."/>
            <person name="Holsappel S."/>
            <person name="Hosono S."/>
            <person name="Hullo M.-F."/>
            <person name="Itaya M."/>
            <person name="Jones L.-M."/>
            <person name="Joris B."/>
            <person name="Karamata D."/>
            <person name="Kasahara Y."/>
            <person name="Klaerr-Blanchard M."/>
            <person name="Klein C."/>
            <person name="Kobayashi Y."/>
            <person name="Koetter P."/>
            <person name="Koningstein G."/>
            <person name="Krogh S."/>
            <person name="Kumano M."/>
            <person name="Kurita K."/>
            <person name="Lapidus A."/>
            <person name="Lardinois S."/>
            <person name="Lauber J."/>
            <person name="Lazarevic V."/>
            <person name="Lee S.-M."/>
            <person name="Levine A."/>
            <person name="Liu H."/>
            <person name="Masuda S."/>
            <person name="Mauel C."/>
            <person name="Medigue C."/>
            <person name="Medina N."/>
            <person name="Mellado R.P."/>
            <person name="Mizuno M."/>
            <person name="Moestl D."/>
            <person name="Nakai S."/>
            <person name="Noback M."/>
            <person name="Noone D."/>
            <person name="O'Reilly M."/>
            <person name="Ogawa K."/>
            <person name="Ogiwara A."/>
            <person name="Oudega B."/>
            <person name="Park S.-H."/>
            <person name="Parro V."/>
            <person name="Pohl T.M."/>
            <person name="Portetelle D."/>
            <person name="Porwollik S."/>
            <person name="Prescott A.M."/>
            <person name="Presecan E."/>
            <person name="Pujic P."/>
            <person name="Purnelle B."/>
            <person name="Rapoport G."/>
            <person name="Rey M."/>
            <person name="Reynolds S."/>
            <person name="Rieger M."/>
            <person name="Rivolta C."/>
            <person name="Rocha E."/>
            <person name="Roche B."/>
            <person name="Rose M."/>
            <person name="Sadaie Y."/>
            <person name="Sato T."/>
            <person name="Scanlan E."/>
            <person name="Schleich S."/>
            <person name="Schroeter R."/>
            <person name="Scoffone F."/>
            <person name="Sekiguchi J."/>
            <person name="Sekowska A."/>
            <person name="Seror S.J."/>
            <person name="Serror P."/>
            <person name="Shin B.-S."/>
            <person name="Soldo B."/>
            <person name="Sorokin A."/>
            <person name="Tacconi E."/>
            <person name="Takagi T."/>
            <person name="Takahashi H."/>
            <person name="Takemaru K."/>
            <person name="Takeuchi M."/>
            <person name="Tamakoshi A."/>
            <person name="Tanaka T."/>
            <person name="Terpstra P."/>
            <person name="Tognoni A."/>
            <person name="Tosato V."/>
            <person name="Uchiyama S."/>
            <person name="Vandenbol M."/>
            <person name="Vannier F."/>
            <person name="Vassarotti A."/>
            <person name="Viari A."/>
            <person name="Wambutt R."/>
            <person name="Wedler E."/>
            <person name="Wedler H."/>
            <person name="Weitzenegger T."/>
            <person name="Winters P."/>
            <person name="Wipat A."/>
            <person name="Yamamoto H."/>
            <person name="Yamane K."/>
            <person name="Yasumoto K."/>
            <person name="Yata K."/>
            <person name="Yoshida K."/>
            <person name="Yoshikawa H.-F."/>
            <person name="Zumstein E."/>
            <person name="Yoshikawa H."/>
            <person name="Danchin A."/>
        </authorList>
    </citation>
    <scope>NUCLEOTIDE SEQUENCE [LARGE SCALE GENOMIC DNA]</scope>
    <source>
        <strain>168</strain>
    </source>
</reference>
<gene>
    <name type="primary">yisB</name>
    <name type="ordered locus">BSU10660</name>
</gene>
<keyword id="KW-1185">Reference proteome</keyword>
<name>YISB_BACSU</name>
<organism>
    <name type="scientific">Bacillus subtilis (strain 168)</name>
    <dbReference type="NCBI Taxonomy" id="224308"/>
    <lineage>
        <taxon>Bacteria</taxon>
        <taxon>Bacillati</taxon>
        <taxon>Bacillota</taxon>
        <taxon>Bacilli</taxon>
        <taxon>Bacillales</taxon>
        <taxon>Bacillaceae</taxon>
        <taxon>Bacillus</taxon>
    </lineage>
</organism>
<protein>
    <recommendedName>
        <fullName>Uncharacterized protein YisB</fullName>
    </recommendedName>
</protein>
<sequence length="100" mass="11450">MAKQIAGICELCGRSDVQLTEHHLTPKEEGGTFLPTAMLCIPCHKQIHALYTNQELAVRLNGMAELRSDPELARFVKWIRKQPPEKLIKTKKSNERKKKK</sequence>
<dbReference type="EMBL" id="Y09476">
    <property type="protein sequence ID" value="CAA70673.1"/>
    <property type="molecule type" value="Genomic_DNA"/>
</dbReference>
<dbReference type="EMBL" id="AL009126">
    <property type="protein sequence ID" value="CAB12906.1"/>
    <property type="molecule type" value="Genomic_DNA"/>
</dbReference>
<dbReference type="PIR" id="B69836">
    <property type="entry name" value="B69836"/>
</dbReference>
<dbReference type="SMR" id="O06715"/>
<dbReference type="FunCoup" id="O06715">
    <property type="interactions" value="3"/>
</dbReference>
<dbReference type="STRING" id="224308.BSU10660"/>
<dbReference type="PaxDb" id="224308-BSU10660"/>
<dbReference type="EnsemblBacteria" id="CAB12906">
    <property type="protein sequence ID" value="CAB12906"/>
    <property type="gene ID" value="BSU_10660"/>
</dbReference>
<dbReference type="GeneID" id="936345"/>
<dbReference type="KEGG" id="bsu:BSU10660"/>
<dbReference type="PATRIC" id="fig|224308.179.peg.1146"/>
<dbReference type="eggNOG" id="COG1403">
    <property type="taxonomic scope" value="Bacteria"/>
</dbReference>
<dbReference type="InParanoid" id="O06715"/>
<dbReference type="OrthoDB" id="9802640at2"/>
<dbReference type="BioCyc" id="BSUB:BSU10660-MONOMER"/>
<dbReference type="Proteomes" id="UP000001570">
    <property type="component" value="Chromosome"/>
</dbReference>
<dbReference type="PANTHER" id="PTHR37827:SF1">
    <property type="entry name" value="HNH DOMAIN-CONTAINING PROTEIN"/>
    <property type="match status" value="1"/>
</dbReference>
<dbReference type="PANTHER" id="PTHR37827">
    <property type="entry name" value="TUDOR DOMAIN-CONTAINING PROTEIN"/>
    <property type="match status" value="1"/>
</dbReference>
<feature type="chain" id="PRO_0000378466" description="Uncharacterized protein YisB">
    <location>
        <begin position="1"/>
        <end position="100"/>
    </location>
</feature>
<proteinExistence type="predicted"/>